<proteinExistence type="inferred from homology"/>
<evidence type="ECO:0000255" key="1">
    <source>
        <dbReference type="HAMAP-Rule" id="MF_01038"/>
    </source>
</evidence>
<accession>Q31V09</accession>
<organism>
    <name type="scientific">Shigella boydii serotype 4 (strain Sb227)</name>
    <dbReference type="NCBI Taxonomy" id="300268"/>
    <lineage>
        <taxon>Bacteria</taxon>
        <taxon>Pseudomonadati</taxon>
        <taxon>Pseudomonadota</taxon>
        <taxon>Gammaproteobacteria</taxon>
        <taxon>Enterobacterales</taxon>
        <taxon>Enterobacteriaceae</taxon>
        <taxon>Shigella</taxon>
    </lineage>
</organism>
<keyword id="KW-0324">Glycolysis</keyword>
<keyword id="KW-0413">Isomerase</keyword>
<keyword id="KW-0464">Manganese</keyword>
<keyword id="KW-0479">Metal-binding</keyword>
<protein>
    <recommendedName>
        <fullName evidence="1">2,3-bisphosphoglycerate-independent phosphoglycerate mutase</fullName>
        <shortName evidence="1">BPG-independent PGAM</shortName>
        <shortName evidence="1">Phosphoglyceromutase</shortName>
        <shortName evidence="1">iPGM</shortName>
        <ecNumber evidence="1">5.4.2.12</ecNumber>
    </recommendedName>
</protein>
<comment type="function">
    <text evidence="1">Catalyzes the interconversion of 2-phosphoglycerate and 3-phosphoglycerate.</text>
</comment>
<comment type="catalytic activity">
    <reaction evidence="1">
        <text>(2R)-2-phosphoglycerate = (2R)-3-phosphoglycerate</text>
        <dbReference type="Rhea" id="RHEA:15901"/>
        <dbReference type="ChEBI" id="CHEBI:58272"/>
        <dbReference type="ChEBI" id="CHEBI:58289"/>
        <dbReference type="EC" id="5.4.2.12"/>
    </reaction>
</comment>
<comment type="cofactor">
    <cofactor evidence="1">
        <name>Mn(2+)</name>
        <dbReference type="ChEBI" id="CHEBI:29035"/>
    </cofactor>
    <text evidence="1">Binds 2 manganese ions per subunit.</text>
</comment>
<comment type="pathway">
    <text evidence="1">Carbohydrate degradation; glycolysis; pyruvate from D-glyceraldehyde 3-phosphate: step 3/5.</text>
</comment>
<comment type="subunit">
    <text evidence="1">Monomer.</text>
</comment>
<comment type="similarity">
    <text evidence="1">Belongs to the BPG-independent phosphoglycerate mutase family.</text>
</comment>
<feature type="chain" id="PRO_0000212202" description="2,3-bisphosphoglycerate-independent phosphoglycerate mutase">
    <location>
        <begin position="1"/>
        <end position="514"/>
    </location>
</feature>
<feature type="active site" description="Phosphoserine intermediate" evidence="1">
    <location>
        <position position="64"/>
    </location>
</feature>
<feature type="binding site" evidence="1">
    <location>
        <position position="14"/>
    </location>
    <ligand>
        <name>Mn(2+)</name>
        <dbReference type="ChEBI" id="CHEBI:29035"/>
        <label>2</label>
    </ligand>
</feature>
<feature type="binding site" evidence="1">
    <location>
        <position position="64"/>
    </location>
    <ligand>
        <name>Mn(2+)</name>
        <dbReference type="ChEBI" id="CHEBI:29035"/>
        <label>2</label>
    </ligand>
</feature>
<feature type="binding site" evidence="1">
    <location>
        <position position="125"/>
    </location>
    <ligand>
        <name>substrate</name>
    </ligand>
</feature>
<feature type="binding site" evidence="1">
    <location>
        <begin position="155"/>
        <end position="156"/>
    </location>
    <ligand>
        <name>substrate</name>
    </ligand>
</feature>
<feature type="binding site" evidence="1">
    <location>
        <position position="187"/>
    </location>
    <ligand>
        <name>substrate</name>
    </ligand>
</feature>
<feature type="binding site" evidence="1">
    <location>
        <position position="193"/>
    </location>
    <ligand>
        <name>substrate</name>
    </ligand>
</feature>
<feature type="binding site" evidence="1">
    <location>
        <begin position="263"/>
        <end position="266"/>
    </location>
    <ligand>
        <name>substrate</name>
    </ligand>
</feature>
<feature type="binding site" evidence="1">
    <location>
        <position position="336"/>
    </location>
    <ligand>
        <name>substrate</name>
    </ligand>
</feature>
<feature type="binding site" evidence="1">
    <location>
        <position position="403"/>
    </location>
    <ligand>
        <name>Mn(2+)</name>
        <dbReference type="ChEBI" id="CHEBI:29035"/>
        <label>1</label>
    </ligand>
</feature>
<feature type="binding site" evidence="1">
    <location>
        <position position="407"/>
    </location>
    <ligand>
        <name>Mn(2+)</name>
        <dbReference type="ChEBI" id="CHEBI:29035"/>
        <label>1</label>
    </ligand>
</feature>
<feature type="binding site" evidence="1">
    <location>
        <position position="444"/>
    </location>
    <ligand>
        <name>Mn(2+)</name>
        <dbReference type="ChEBI" id="CHEBI:29035"/>
        <label>2</label>
    </ligand>
</feature>
<feature type="binding site" evidence="1">
    <location>
        <position position="445"/>
    </location>
    <ligand>
        <name>Mn(2+)</name>
        <dbReference type="ChEBI" id="CHEBI:29035"/>
        <label>2</label>
    </ligand>
</feature>
<feature type="binding site" evidence="1">
    <location>
        <position position="463"/>
    </location>
    <ligand>
        <name>Mn(2+)</name>
        <dbReference type="ChEBI" id="CHEBI:29035"/>
        <label>1</label>
    </ligand>
</feature>
<reference key="1">
    <citation type="journal article" date="2005" name="Nucleic Acids Res.">
        <title>Genome dynamics and diversity of Shigella species, the etiologic agents of bacillary dysentery.</title>
        <authorList>
            <person name="Yang F."/>
            <person name="Yang J."/>
            <person name="Zhang X."/>
            <person name="Chen L."/>
            <person name="Jiang Y."/>
            <person name="Yan Y."/>
            <person name="Tang X."/>
            <person name="Wang J."/>
            <person name="Xiong Z."/>
            <person name="Dong J."/>
            <person name="Xue Y."/>
            <person name="Zhu Y."/>
            <person name="Xu X."/>
            <person name="Sun L."/>
            <person name="Chen S."/>
            <person name="Nie H."/>
            <person name="Peng J."/>
            <person name="Xu J."/>
            <person name="Wang Y."/>
            <person name="Yuan Z."/>
            <person name="Wen Y."/>
            <person name="Yao Z."/>
            <person name="Shen Y."/>
            <person name="Qiang B."/>
            <person name="Hou Y."/>
            <person name="Yu J."/>
            <person name="Jin Q."/>
        </authorList>
    </citation>
    <scope>NUCLEOTIDE SEQUENCE [LARGE SCALE GENOMIC DNA]</scope>
    <source>
        <strain>Sb227</strain>
    </source>
</reference>
<dbReference type="EC" id="5.4.2.12" evidence="1"/>
<dbReference type="EMBL" id="CP000036">
    <property type="protein sequence ID" value="ABB68099.1"/>
    <property type="molecule type" value="Genomic_DNA"/>
</dbReference>
<dbReference type="SMR" id="Q31V09"/>
<dbReference type="KEGG" id="sbo:SBO_3618"/>
<dbReference type="HOGENOM" id="CLU_026099_2_0_6"/>
<dbReference type="UniPathway" id="UPA00109">
    <property type="reaction ID" value="UER00186"/>
</dbReference>
<dbReference type="Proteomes" id="UP000007067">
    <property type="component" value="Chromosome"/>
</dbReference>
<dbReference type="GO" id="GO:0005829">
    <property type="term" value="C:cytosol"/>
    <property type="evidence" value="ECO:0007669"/>
    <property type="project" value="TreeGrafter"/>
</dbReference>
<dbReference type="GO" id="GO:0030145">
    <property type="term" value="F:manganese ion binding"/>
    <property type="evidence" value="ECO:0007669"/>
    <property type="project" value="UniProtKB-UniRule"/>
</dbReference>
<dbReference type="GO" id="GO:0004619">
    <property type="term" value="F:phosphoglycerate mutase activity"/>
    <property type="evidence" value="ECO:0007669"/>
    <property type="project" value="UniProtKB-EC"/>
</dbReference>
<dbReference type="GO" id="GO:0006007">
    <property type="term" value="P:glucose catabolic process"/>
    <property type="evidence" value="ECO:0007669"/>
    <property type="project" value="InterPro"/>
</dbReference>
<dbReference type="GO" id="GO:0006096">
    <property type="term" value="P:glycolytic process"/>
    <property type="evidence" value="ECO:0007669"/>
    <property type="project" value="UniProtKB-UniRule"/>
</dbReference>
<dbReference type="CDD" id="cd16010">
    <property type="entry name" value="iPGM"/>
    <property type="match status" value="1"/>
</dbReference>
<dbReference type="FunFam" id="3.40.1450.10:FF:000001">
    <property type="entry name" value="2,3-bisphosphoglycerate-independent phosphoglycerate mutase"/>
    <property type="match status" value="1"/>
</dbReference>
<dbReference type="FunFam" id="3.40.720.10:FF:000001">
    <property type="entry name" value="2,3-bisphosphoglycerate-independent phosphoglycerate mutase"/>
    <property type="match status" value="1"/>
</dbReference>
<dbReference type="Gene3D" id="3.40.720.10">
    <property type="entry name" value="Alkaline Phosphatase, subunit A"/>
    <property type="match status" value="1"/>
</dbReference>
<dbReference type="Gene3D" id="3.40.1450.10">
    <property type="entry name" value="BPG-independent phosphoglycerate mutase, domain B"/>
    <property type="match status" value="1"/>
</dbReference>
<dbReference type="HAMAP" id="MF_01038">
    <property type="entry name" value="GpmI"/>
    <property type="match status" value="1"/>
</dbReference>
<dbReference type="InterPro" id="IPR017850">
    <property type="entry name" value="Alkaline_phosphatase_core_sf"/>
</dbReference>
<dbReference type="InterPro" id="IPR011258">
    <property type="entry name" value="BPG-indep_PGM_N"/>
</dbReference>
<dbReference type="InterPro" id="IPR006124">
    <property type="entry name" value="Metalloenzyme"/>
</dbReference>
<dbReference type="InterPro" id="IPR036646">
    <property type="entry name" value="PGAM_B_sf"/>
</dbReference>
<dbReference type="InterPro" id="IPR005995">
    <property type="entry name" value="Pgm_bpd_ind"/>
</dbReference>
<dbReference type="NCBIfam" id="TIGR01307">
    <property type="entry name" value="pgm_bpd_ind"/>
    <property type="match status" value="1"/>
</dbReference>
<dbReference type="NCBIfam" id="NF003897">
    <property type="entry name" value="PRK05434.1-5"/>
    <property type="match status" value="1"/>
</dbReference>
<dbReference type="PANTHER" id="PTHR31637">
    <property type="entry name" value="2,3-BISPHOSPHOGLYCERATE-INDEPENDENT PHOSPHOGLYCERATE MUTASE"/>
    <property type="match status" value="1"/>
</dbReference>
<dbReference type="PANTHER" id="PTHR31637:SF0">
    <property type="entry name" value="2,3-BISPHOSPHOGLYCERATE-INDEPENDENT PHOSPHOGLYCERATE MUTASE"/>
    <property type="match status" value="1"/>
</dbReference>
<dbReference type="Pfam" id="PF06415">
    <property type="entry name" value="iPGM_N"/>
    <property type="match status" value="1"/>
</dbReference>
<dbReference type="Pfam" id="PF01676">
    <property type="entry name" value="Metalloenzyme"/>
    <property type="match status" value="1"/>
</dbReference>
<dbReference type="PIRSF" id="PIRSF001492">
    <property type="entry name" value="IPGAM"/>
    <property type="match status" value="1"/>
</dbReference>
<dbReference type="SUPFAM" id="SSF64158">
    <property type="entry name" value="2,3-Bisphosphoglycerate-independent phosphoglycerate mutase, substrate-binding domain"/>
    <property type="match status" value="1"/>
</dbReference>
<dbReference type="SUPFAM" id="SSF53649">
    <property type="entry name" value="Alkaline phosphatase-like"/>
    <property type="match status" value="1"/>
</dbReference>
<name>GPMI_SHIBS</name>
<gene>
    <name evidence="1" type="primary">gpmI</name>
    <name type="ordered locus">SBO_3618</name>
</gene>
<sequence>MSVSKKPMVLVILDGYGYREEQQDNAIFSAKTPVMDALWANRPHTLIDASGLEVGLPDRQMGNSEVGHVNLGAGRIVYQDLTRLDVEIKDRAFFANPVLTGAVDKAKNAGKAVHIMGLLSAGGVHSHEDHIMAMVELAAERGAEKIYLHAFLDGRDTPPRSAESSLKKFEEKFAALGKGRVASIIGRYYAMDRDNRWDRVEKAYDLLTLAQGEFQADTAVAGLQAAYARDENDEFVKATVIRAEGQPDAAMEDGDALIFMNFRADRAREITRAFVNADFDGFARKKVVNVDFVMLTEYAADIKTAVAYPPASLVNTFGEWMAKNDKTQLRISETEKYAHVTFFFNGGVEESFKGEDRILINSPKVATYDLQPEMSSAELTEKLVAAIKSGKYDTIICNYPNGDMVGHTGVMEAAVKAVEALDHCVEEVAKAVESVGGQLLITADHGNAEQMRDPATGQAHTAHTNLPVPLIYVGDKNVKAVAGGKLSDIAPTMLSLMGMEIPQEMTGKPLFIVE</sequence>